<protein>
    <recommendedName>
        <fullName evidence="1">Glyoxylate/hydroxypyruvate reductase A</fullName>
        <ecNumber evidence="1">1.1.1.79</ecNumber>
        <ecNumber evidence="1">1.1.1.81</ecNumber>
    </recommendedName>
    <alternativeName>
        <fullName evidence="1">2-ketoacid reductase</fullName>
    </alternativeName>
</protein>
<organism>
    <name type="scientific">Salmonella choleraesuis (strain SC-B67)</name>
    <dbReference type="NCBI Taxonomy" id="321314"/>
    <lineage>
        <taxon>Bacteria</taxon>
        <taxon>Pseudomonadati</taxon>
        <taxon>Pseudomonadota</taxon>
        <taxon>Gammaproteobacteria</taxon>
        <taxon>Enterobacterales</taxon>
        <taxon>Enterobacteriaceae</taxon>
        <taxon>Salmonella</taxon>
    </lineage>
</organism>
<sequence length="312" mass="35064">MEIIFYHPTFNAAWWVNALEKALPHARVREWKVGDNNPADYALVWQPPVEMLAGRRLKAVFVLGAGVDAILSKLNAHPEMLDASIPLFRLEDTGMGLQMQEYAVSQVLHWFRRFDDYQALKNQALWKPLPEYTREEFSVGIMGAGVLGAKVAESLQAWGFPLRCWSRSRKSWPGVESYVGREELRAFLNQTRVLINLLPNTTQTVGIINSELLDQLPDGAYVLNLARGVHVQEADLLAALDSGKLKGAMLDVFSQEPLPQESPLWRHPRVAMTPHIAAVTRPAEAIDYISRTITQLEKGEPVTGQVDRARGY</sequence>
<name>GHRA_SALCH</name>
<evidence type="ECO:0000255" key="1">
    <source>
        <dbReference type="HAMAP-Rule" id="MF_01666"/>
    </source>
</evidence>
<reference key="1">
    <citation type="journal article" date="2005" name="Nucleic Acids Res.">
        <title>The genome sequence of Salmonella enterica serovar Choleraesuis, a highly invasive and resistant zoonotic pathogen.</title>
        <authorList>
            <person name="Chiu C.-H."/>
            <person name="Tang P."/>
            <person name="Chu C."/>
            <person name="Hu S."/>
            <person name="Bao Q."/>
            <person name="Yu J."/>
            <person name="Chou Y.-Y."/>
            <person name="Wang H.-S."/>
            <person name="Lee Y.-S."/>
        </authorList>
    </citation>
    <scope>NUCLEOTIDE SEQUENCE [LARGE SCALE GENOMIC DNA]</scope>
    <source>
        <strain>SC-B67</strain>
    </source>
</reference>
<gene>
    <name evidence="1" type="primary">ghrA</name>
    <name type="ordered locus">SCH_1083</name>
</gene>
<accession>Q57QM2</accession>
<comment type="function">
    <text evidence="1">Catalyzes the NADPH-dependent reduction of glyoxylate and hydroxypyruvate into glycolate and glycerate, respectively.</text>
</comment>
<comment type="catalytic activity">
    <reaction evidence="1">
        <text>glycolate + NADP(+) = glyoxylate + NADPH + H(+)</text>
        <dbReference type="Rhea" id="RHEA:10992"/>
        <dbReference type="ChEBI" id="CHEBI:15378"/>
        <dbReference type="ChEBI" id="CHEBI:29805"/>
        <dbReference type="ChEBI" id="CHEBI:36655"/>
        <dbReference type="ChEBI" id="CHEBI:57783"/>
        <dbReference type="ChEBI" id="CHEBI:58349"/>
        <dbReference type="EC" id="1.1.1.79"/>
    </reaction>
</comment>
<comment type="catalytic activity">
    <reaction evidence="1">
        <text>(R)-glycerate + NAD(+) = 3-hydroxypyruvate + NADH + H(+)</text>
        <dbReference type="Rhea" id="RHEA:17905"/>
        <dbReference type="ChEBI" id="CHEBI:15378"/>
        <dbReference type="ChEBI" id="CHEBI:16659"/>
        <dbReference type="ChEBI" id="CHEBI:17180"/>
        <dbReference type="ChEBI" id="CHEBI:57540"/>
        <dbReference type="ChEBI" id="CHEBI:57945"/>
        <dbReference type="EC" id="1.1.1.81"/>
    </reaction>
</comment>
<comment type="catalytic activity">
    <reaction evidence="1">
        <text>(R)-glycerate + NADP(+) = 3-hydroxypyruvate + NADPH + H(+)</text>
        <dbReference type="Rhea" id="RHEA:18657"/>
        <dbReference type="ChEBI" id="CHEBI:15378"/>
        <dbReference type="ChEBI" id="CHEBI:16659"/>
        <dbReference type="ChEBI" id="CHEBI:17180"/>
        <dbReference type="ChEBI" id="CHEBI:57783"/>
        <dbReference type="ChEBI" id="CHEBI:58349"/>
        <dbReference type="EC" id="1.1.1.81"/>
    </reaction>
</comment>
<comment type="subcellular location">
    <subcellularLocation>
        <location evidence="1">Cytoplasm</location>
    </subcellularLocation>
</comment>
<comment type="similarity">
    <text evidence="1">Belongs to the D-isomer specific 2-hydroxyacid dehydrogenase family. GhrA subfamily.</text>
</comment>
<dbReference type="EC" id="1.1.1.79" evidence="1"/>
<dbReference type="EC" id="1.1.1.81" evidence="1"/>
<dbReference type="EMBL" id="AE017220">
    <property type="protein sequence ID" value="AAX64989.1"/>
    <property type="molecule type" value="Genomic_DNA"/>
</dbReference>
<dbReference type="RefSeq" id="WP_001539683.1">
    <property type="nucleotide sequence ID" value="NC_006905.1"/>
</dbReference>
<dbReference type="SMR" id="Q57QM2"/>
<dbReference type="KEGG" id="sec:SCH_1083"/>
<dbReference type="HOGENOM" id="CLU_019796_1_0_6"/>
<dbReference type="Proteomes" id="UP000000538">
    <property type="component" value="Chromosome"/>
</dbReference>
<dbReference type="GO" id="GO:0005737">
    <property type="term" value="C:cytoplasm"/>
    <property type="evidence" value="ECO:0007669"/>
    <property type="project" value="UniProtKB-SubCell"/>
</dbReference>
<dbReference type="GO" id="GO:0030267">
    <property type="term" value="F:glyoxylate reductase (NADPH) activity"/>
    <property type="evidence" value="ECO:0007669"/>
    <property type="project" value="UniProtKB-UniRule"/>
</dbReference>
<dbReference type="GO" id="GO:0008465">
    <property type="term" value="F:hydroxypyruvate reductase (NADH) activity"/>
    <property type="evidence" value="ECO:0007669"/>
    <property type="project" value="RHEA"/>
</dbReference>
<dbReference type="GO" id="GO:0120509">
    <property type="term" value="F:hydroxypyruvate reductase (NADPH) activity"/>
    <property type="evidence" value="ECO:0007669"/>
    <property type="project" value="RHEA"/>
</dbReference>
<dbReference type="GO" id="GO:0051287">
    <property type="term" value="F:NAD binding"/>
    <property type="evidence" value="ECO:0007669"/>
    <property type="project" value="InterPro"/>
</dbReference>
<dbReference type="CDD" id="cd12164">
    <property type="entry name" value="GDH_like_2"/>
    <property type="match status" value="1"/>
</dbReference>
<dbReference type="FunFam" id="3.40.50.720:FF:000110">
    <property type="entry name" value="Glyoxylate/hydroxypyruvate reductase A"/>
    <property type="match status" value="1"/>
</dbReference>
<dbReference type="Gene3D" id="3.40.50.720">
    <property type="entry name" value="NAD(P)-binding Rossmann-like Domain"/>
    <property type="match status" value="2"/>
</dbReference>
<dbReference type="HAMAP" id="MF_01666">
    <property type="entry name" value="2_Hacid_dh_C_GhrA"/>
    <property type="match status" value="1"/>
</dbReference>
<dbReference type="InterPro" id="IPR006140">
    <property type="entry name" value="D-isomer_DH_NAD-bd"/>
</dbReference>
<dbReference type="InterPro" id="IPR023514">
    <property type="entry name" value="GhrA_Enterobacterales"/>
</dbReference>
<dbReference type="InterPro" id="IPR036291">
    <property type="entry name" value="NAD(P)-bd_dom_sf"/>
</dbReference>
<dbReference type="NCBIfam" id="NF012013">
    <property type="entry name" value="PRK15469.1"/>
    <property type="match status" value="1"/>
</dbReference>
<dbReference type="PANTHER" id="PTHR43333">
    <property type="entry name" value="2-HACID_DH_C DOMAIN-CONTAINING PROTEIN"/>
    <property type="match status" value="1"/>
</dbReference>
<dbReference type="PANTHER" id="PTHR43333:SF1">
    <property type="entry name" value="D-ISOMER SPECIFIC 2-HYDROXYACID DEHYDROGENASE NAD-BINDING DOMAIN-CONTAINING PROTEIN"/>
    <property type="match status" value="1"/>
</dbReference>
<dbReference type="Pfam" id="PF02826">
    <property type="entry name" value="2-Hacid_dh_C"/>
    <property type="match status" value="1"/>
</dbReference>
<dbReference type="SUPFAM" id="SSF51735">
    <property type="entry name" value="NAD(P)-binding Rossmann-fold domains"/>
    <property type="match status" value="1"/>
</dbReference>
<keyword id="KW-0963">Cytoplasm</keyword>
<keyword id="KW-0520">NAD</keyword>
<keyword id="KW-0521">NADP</keyword>
<keyword id="KW-0560">Oxidoreductase</keyword>
<feature type="chain" id="PRO_0000348368" description="Glyoxylate/hydroxypyruvate reductase A">
    <location>
        <begin position="1"/>
        <end position="312"/>
    </location>
</feature>
<feature type="active site" evidence="1">
    <location>
        <position position="227"/>
    </location>
</feature>
<feature type="active site" description="Proton donor" evidence="1">
    <location>
        <position position="275"/>
    </location>
</feature>
<proteinExistence type="inferred from homology"/>